<evidence type="ECO:0000255" key="1">
    <source>
        <dbReference type="HAMAP-Rule" id="MF_00210"/>
    </source>
</evidence>
<evidence type="ECO:0000305" key="2"/>
<protein>
    <recommendedName>
        <fullName evidence="1">3-phosphoshikimate 1-carboxyvinyltransferase</fullName>
        <ecNumber evidence="1">2.5.1.19</ecNumber>
    </recommendedName>
    <alternativeName>
        <fullName evidence="1">5-enolpyruvylshikimate-3-phosphate synthase</fullName>
        <shortName evidence="1">EPSP synthase</shortName>
        <shortName evidence="1">EPSPS</shortName>
    </alternativeName>
</protein>
<comment type="function">
    <text evidence="1">Catalyzes the transfer of the enolpyruvyl moiety of phosphoenolpyruvate (PEP) to the 5-hydroxyl of shikimate-3-phosphate (S3P) to produce enolpyruvyl shikimate-3-phosphate and inorganic phosphate.</text>
</comment>
<comment type="catalytic activity">
    <reaction evidence="1">
        <text>3-phosphoshikimate + phosphoenolpyruvate = 5-O-(1-carboxyvinyl)-3-phosphoshikimate + phosphate</text>
        <dbReference type="Rhea" id="RHEA:21256"/>
        <dbReference type="ChEBI" id="CHEBI:43474"/>
        <dbReference type="ChEBI" id="CHEBI:57701"/>
        <dbReference type="ChEBI" id="CHEBI:58702"/>
        <dbReference type="ChEBI" id="CHEBI:145989"/>
        <dbReference type="EC" id="2.5.1.19"/>
    </reaction>
    <physiologicalReaction direction="left-to-right" evidence="1">
        <dbReference type="Rhea" id="RHEA:21257"/>
    </physiologicalReaction>
</comment>
<comment type="pathway">
    <text evidence="1">Metabolic intermediate biosynthesis; chorismate biosynthesis; chorismate from D-erythrose 4-phosphate and phosphoenolpyruvate: step 6/7.</text>
</comment>
<comment type="subunit">
    <text evidence="1">Monomer.</text>
</comment>
<comment type="subcellular location">
    <subcellularLocation>
        <location evidence="1">Cytoplasm</location>
    </subcellularLocation>
</comment>
<comment type="similarity">
    <text evidence="1 2">Belongs to the EPSP synthase family.</text>
</comment>
<comment type="sequence caution" evidence="2">
    <conflict type="erroneous initiation">
        <sequence resource="EMBL-CDS" id="AAM86335"/>
    </conflict>
    <text>Extended N-terminus.</text>
</comment>
<sequence>MLESLTLQPIALVNGTVNLPGSKSVSNRALLLAALAEGTTQLNNVLDSDDIRHMLNALQALGVDFRLSADRTCCEVDGLGGKLVAEQPLSLFLGNAGTAMRPLAAVLCLGNSDIVLTGEPRMKERPIGHLVDALRQGGAQIDYLEQENYPPLRLRGGFRGGELTVDGRVSSQFLTALLMTAPLAEQDTTIRIMGDLVSKPYIDITLHLMKAFGIDVGHENYQIFHIKGGQTYRSPGTYLVEGDASSASYFLAAAAIKGGTVRVTGIGKKSVQGDTKFADVLEKMGAKVTWGDDYIECSRGELQGIDMDMNHIPDAAMTIATTALFATGPTTIRNIYNWRVKETDRLTAMATELRKVGAEVEEGEDYIRVVPPLQLTAADIGTYDDHRMAMCFSLVALSDTPVTILDPKCTAKTFPDYFEQFARLSQLA</sequence>
<feature type="chain" id="PRO_0000088323" description="3-phosphoshikimate 1-carboxyvinyltransferase">
    <location>
        <begin position="1"/>
        <end position="428"/>
    </location>
</feature>
<feature type="active site" description="Proton acceptor" evidence="1">
    <location>
        <position position="314"/>
    </location>
</feature>
<feature type="binding site" evidence="1">
    <location>
        <position position="23"/>
    </location>
    <ligand>
        <name>3-phosphoshikimate</name>
        <dbReference type="ChEBI" id="CHEBI:145989"/>
    </ligand>
</feature>
<feature type="binding site" evidence="1">
    <location>
        <position position="23"/>
    </location>
    <ligand>
        <name>phosphoenolpyruvate</name>
        <dbReference type="ChEBI" id="CHEBI:58702"/>
    </ligand>
</feature>
<feature type="binding site" evidence="1">
    <location>
        <position position="24"/>
    </location>
    <ligand>
        <name>3-phosphoshikimate</name>
        <dbReference type="ChEBI" id="CHEBI:145989"/>
    </ligand>
</feature>
<feature type="binding site" evidence="1">
    <location>
        <position position="28"/>
    </location>
    <ligand>
        <name>3-phosphoshikimate</name>
        <dbReference type="ChEBI" id="CHEBI:145989"/>
    </ligand>
</feature>
<feature type="binding site" evidence="1">
    <location>
        <position position="97"/>
    </location>
    <ligand>
        <name>phosphoenolpyruvate</name>
        <dbReference type="ChEBI" id="CHEBI:58702"/>
    </ligand>
</feature>
<feature type="binding site" evidence="1">
    <location>
        <position position="125"/>
    </location>
    <ligand>
        <name>phosphoenolpyruvate</name>
        <dbReference type="ChEBI" id="CHEBI:58702"/>
    </ligand>
</feature>
<feature type="binding site" evidence="1">
    <location>
        <position position="170"/>
    </location>
    <ligand>
        <name>3-phosphoshikimate</name>
        <dbReference type="ChEBI" id="CHEBI:145989"/>
    </ligand>
</feature>
<feature type="binding site" evidence="1">
    <location>
        <position position="171"/>
    </location>
    <ligand>
        <name>3-phosphoshikimate</name>
        <dbReference type="ChEBI" id="CHEBI:145989"/>
    </ligand>
</feature>
<feature type="binding site" evidence="1">
    <location>
        <position position="172"/>
    </location>
    <ligand>
        <name>3-phosphoshikimate</name>
        <dbReference type="ChEBI" id="CHEBI:145989"/>
    </ligand>
</feature>
<feature type="binding site" evidence="1">
    <location>
        <position position="172"/>
    </location>
    <ligand>
        <name>phosphoenolpyruvate</name>
        <dbReference type="ChEBI" id="CHEBI:58702"/>
    </ligand>
</feature>
<feature type="binding site" evidence="1">
    <location>
        <position position="198"/>
    </location>
    <ligand>
        <name>3-phosphoshikimate</name>
        <dbReference type="ChEBI" id="CHEBI:145989"/>
    </ligand>
</feature>
<feature type="binding site" evidence="1">
    <location>
        <position position="314"/>
    </location>
    <ligand>
        <name>3-phosphoshikimate</name>
        <dbReference type="ChEBI" id="CHEBI:145989"/>
    </ligand>
</feature>
<feature type="binding site" evidence="1">
    <location>
        <position position="337"/>
    </location>
    <ligand>
        <name>3-phosphoshikimate</name>
        <dbReference type="ChEBI" id="CHEBI:145989"/>
    </ligand>
</feature>
<feature type="binding site" evidence="1">
    <location>
        <position position="341"/>
    </location>
    <ligand>
        <name>3-phosphoshikimate</name>
        <dbReference type="ChEBI" id="CHEBI:145989"/>
    </ligand>
</feature>
<feature type="binding site" evidence="1">
    <location>
        <position position="345"/>
    </location>
    <ligand>
        <name>phosphoenolpyruvate</name>
        <dbReference type="ChEBI" id="CHEBI:58702"/>
    </ligand>
</feature>
<feature type="binding site" evidence="1">
    <location>
        <position position="387"/>
    </location>
    <ligand>
        <name>phosphoenolpyruvate</name>
        <dbReference type="ChEBI" id="CHEBI:58702"/>
    </ligand>
</feature>
<feature type="binding site" evidence="1">
    <location>
        <position position="412"/>
    </location>
    <ligand>
        <name>phosphoenolpyruvate</name>
        <dbReference type="ChEBI" id="CHEBI:58702"/>
    </ligand>
</feature>
<feature type="sequence conflict" description="In Ref. 1; AAB48057." evidence="2" ref="1">
    <original>LSQLA</original>
    <variation>K</variation>
    <location>
        <begin position="424"/>
        <end position="428"/>
    </location>
</feature>
<keyword id="KW-0028">Amino-acid biosynthesis</keyword>
<keyword id="KW-0057">Aromatic amino acid biosynthesis</keyword>
<keyword id="KW-0963">Cytoplasm</keyword>
<keyword id="KW-1185">Reference proteome</keyword>
<keyword id="KW-0808">Transferase</keyword>
<reference key="1">
    <citation type="journal article" date="1996" name="Microbiology">
        <title>An aroA mutant of Yersinia pestis is attenuated in guinea-pigs, but virulent in mice.</title>
        <authorList>
            <person name="Oyston P.C.F."/>
            <person name="Russell P."/>
            <person name="Williamson E.D."/>
            <person name="Titball R.W."/>
        </authorList>
    </citation>
    <scope>NUCLEOTIDE SEQUENCE [GENOMIC DNA]</scope>
</reference>
<reference key="2">
    <citation type="journal article" date="2001" name="Nature">
        <title>Genome sequence of Yersinia pestis, the causative agent of plague.</title>
        <authorList>
            <person name="Parkhill J."/>
            <person name="Wren B.W."/>
            <person name="Thomson N.R."/>
            <person name="Titball R.W."/>
            <person name="Holden M.T.G."/>
            <person name="Prentice M.B."/>
            <person name="Sebaihia M."/>
            <person name="James K.D."/>
            <person name="Churcher C.M."/>
            <person name="Mungall K.L."/>
            <person name="Baker S."/>
            <person name="Basham D."/>
            <person name="Bentley S.D."/>
            <person name="Brooks K."/>
            <person name="Cerdeno-Tarraga A.-M."/>
            <person name="Chillingworth T."/>
            <person name="Cronin A."/>
            <person name="Davies R.M."/>
            <person name="Davis P."/>
            <person name="Dougan G."/>
            <person name="Feltwell T."/>
            <person name="Hamlin N."/>
            <person name="Holroyd S."/>
            <person name="Jagels K."/>
            <person name="Karlyshev A.V."/>
            <person name="Leather S."/>
            <person name="Moule S."/>
            <person name="Oyston P.C.F."/>
            <person name="Quail M.A."/>
            <person name="Rutherford K.M."/>
            <person name="Simmonds M."/>
            <person name="Skelton J."/>
            <person name="Stevens K."/>
            <person name="Whitehead S."/>
            <person name="Barrell B.G."/>
        </authorList>
    </citation>
    <scope>NUCLEOTIDE SEQUENCE [LARGE SCALE GENOMIC DNA]</scope>
    <source>
        <strain>CO-92 / Biovar Orientalis</strain>
    </source>
</reference>
<reference key="3">
    <citation type="journal article" date="2002" name="J. Bacteriol.">
        <title>Genome sequence of Yersinia pestis KIM.</title>
        <authorList>
            <person name="Deng W."/>
            <person name="Burland V."/>
            <person name="Plunkett G. III"/>
            <person name="Boutin A."/>
            <person name="Mayhew G.F."/>
            <person name="Liss P."/>
            <person name="Perna N.T."/>
            <person name="Rose D.J."/>
            <person name="Mau B."/>
            <person name="Zhou S."/>
            <person name="Schwartz D.C."/>
            <person name="Fetherston J.D."/>
            <person name="Lindler L.E."/>
            <person name="Brubaker R.R."/>
            <person name="Plano G.V."/>
            <person name="Straley S.C."/>
            <person name="McDonough K.A."/>
            <person name="Nilles M.L."/>
            <person name="Matson J.S."/>
            <person name="Blattner F.R."/>
            <person name="Perry R.D."/>
        </authorList>
    </citation>
    <scope>NUCLEOTIDE SEQUENCE [LARGE SCALE GENOMIC DNA]</scope>
    <source>
        <strain>KIM10+ / Biovar Mediaevalis</strain>
    </source>
</reference>
<reference key="4">
    <citation type="journal article" date="2004" name="DNA Res.">
        <title>Complete genome sequence of Yersinia pestis strain 91001, an isolate avirulent to humans.</title>
        <authorList>
            <person name="Song Y."/>
            <person name="Tong Z."/>
            <person name="Wang J."/>
            <person name="Wang L."/>
            <person name="Guo Z."/>
            <person name="Han Y."/>
            <person name="Zhang J."/>
            <person name="Pei D."/>
            <person name="Zhou D."/>
            <person name="Qin H."/>
            <person name="Pang X."/>
            <person name="Han Y."/>
            <person name="Zhai J."/>
            <person name="Li M."/>
            <person name="Cui B."/>
            <person name="Qi Z."/>
            <person name="Jin L."/>
            <person name="Dai R."/>
            <person name="Chen F."/>
            <person name="Li S."/>
            <person name="Ye C."/>
            <person name="Du Z."/>
            <person name="Lin W."/>
            <person name="Wang J."/>
            <person name="Yu J."/>
            <person name="Yang H."/>
            <person name="Wang J."/>
            <person name="Huang P."/>
            <person name="Yang R."/>
        </authorList>
    </citation>
    <scope>NUCLEOTIDE SEQUENCE [LARGE SCALE GENOMIC DNA]</scope>
    <source>
        <strain>91001 / Biovar Mediaevalis</strain>
    </source>
</reference>
<accession>Q60112</accession>
<accession>Q0WH25</accession>
<organism>
    <name type="scientific">Yersinia pestis</name>
    <dbReference type="NCBI Taxonomy" id="632"/>
    <lineage>
        <taxon>Bacteria</taxon>
        <taxon>Pseudomonadati</taxon>
        <taxon>Pseudomonadota</taxon>
        <taxon>Gammaproteobacteria</taxon>
        <taxon>Enterobacterales</taxon>
        <taxon>Yersiniaceae</taxon>
        <taxon>Yersinia</taxon>
    </lineage>
</organism>
<dbReference type="EC" id="2.5.1.19" evidence="1"/>
<dbReference type="EMBL" id="L46372">
    <property type="protein sequence ID" value="AAB48057.1"/>
    <property type="molecule type" value="Genomic_DNA"/>
</dbReference>
<dbReference type="EMBL" id="AL590842">
    <property type="protein sequence ID" value="CAL20042.1"/>
    <property type="molecule type" value="Genomic_DNA"/>
</dbReference>
<dbReference type="EMBL" id="AE009952">
    <property type="protein sequence ID" value="AAM86335.1"/>
    <property type="status" value="ALT_INIT"/>
    <property type="molecule type" value="Genomic_DNA"/>
</dbReference>
<dbReference type="EMBL" id="AE017042">
    <property type="protein sequence ID" value="AAS61446.1"/>
    <property type="molecule type" value="Genomic_DNA"/>
</dbReference>
<dbReference type="PIR" id="AH0169">
    <property type="entry name" value="AH0169"/>
</dbReference>
<dbReference type="RefSeq" id="WP_002211325.1">
    <property type="nucleotide sequence ID" value="NZ_WUCM01000045.1"/>
</dbReference>
<dbReference type="RefSeq" id="YP_002346413.1">
    <property type="nucleotide sequence ID" value="NC_003143.1"/>
</dbReference>
<dbReference type="SMR" id="Q60112"/>
<dbReference type="STRING" id="214092.YPO1390"/>
<dbReference type="PaxDb" id="214092-YPO1390"/>
<dbReference type="DNASU" id="1147730"/>
<dbReference type="EnsemblBacteria" id="AAS61446">
    <property type="protein sequence ID" value="AAS61446"/>
    <property type="gene ID" value="YP_1203"/>
</dbReference>
<dbReference type="GeneID" id="57977186"/>
<dbReference type="KEGG" id="ype:YPO1390"/>
<dbReference type="KEGG" id="ypk:y2783"/>
<dbReference type="KEGG" id="ypm:YP_1203"/>
<dbReference type="PATRIC" id="fig|214092.21.peg.1713"/>
<dbReference type="eggNOG" id="COG0128">
    <property type="taxonomic scope" value="Bacteria"/>
</dbReference>
<dbReference type="HOGENOM" id="CLU_024321_0_0_6"/>
<dbReference type="OMA" id="YEDHRMA"/>
<dbReference type="OrthoDB" id="9809920at2"/>
<dbReference type="UniPathway" id="UPA00053">
    <property type="reaction ID" value="UER00089"/>
</dbReference>
<dbReference type="Proteomes" id="UP000000815">
    <property type="component" value="Chromosome"/>
</dbReference>
<dbReference type="Proteomes" id="UP000001019">
    <property type="component" value="Chromosome"/>
</dbReference>
<dbReference type="Proteomes" id="UP000002490">
    <property type="component" value="Chromosome"/>
</dbReference>
<dbReference type="GO" id="GO:0005737">
    <property type="term" value="C:cytoplasm"/>
    <property type="evidence" value="ECO:0007669"/>
    <property type="project" value="UniProtKB-SubCell"/>
</dbReference>
<dbReference type="GO" id="GO:0003866">
    <property type="term" value="F:3-phosphoshikimate 1-carboxyvinyltransferase activity"/>
    <property type="evidence" value="ECO:0000318"/>
    <property type="project" value="GO_Central"/>
</dbReference>
<dbReference type="GO" id="GO:0008652">
    <property type="term" value="P:amino acid biosynthetic process"/>
    <property type="evidence" value="ECO:0007669"/>
    <property type="project" value="UniProtKB-KW"/>
</dbReference>
<dbReference type="GO" id="GO:0009073">
    <property type="term" value="P:aromatic amino acid family biosynthetic process"/>
    <property type="evidence" value="ECO:0007669"/>
    <property type="project" value="UniProtKB-KW"/>
</dbReference>
<dbReference type="GO" id="GO:0009423">
    <property type="term" value="P:chorismate biosynthetic process"/>
    <property type="evidence" value="ECO:0000318"/>
    <property type="project" value="GO_Central"/>
</dbReference>
<dbReference type="CDD" id="cd01556">
    <property type="entry name" value="EPSP_synthase"/>
    <property type="match status" value="1"/>
</dbReference>
<dbReference type="FunFam" id="3.65.10.10:FF:000003">
    <property type="entry name" value="3-phosphoshikimate 1-carboxyvinyltransferase"/>
    <property type="match status" value="1"/>
</dbReference>
<dbReference type="FunFam" id="3.65.10.10:FF:000004">
    <property type="entry name" value="3-phosphoshikimate 1-carboxyvinyltransferase"/>
    <property type="match status" value="1"/>
</dbReference>
<dbReference type="Gene3D" id="3.65.10.10">
    <property type="entry name" value="Enolpyruvate transferase domain"/>
    <property type="match status" value="2"/>
</dbReference>
<dbReference type="HAMAP" id="MF_00210">
    <property type="entry name" value="EPSP_synth"/>
    <property type="match status" value="1"/>
</dbReference>
<dbReference type="InterPro" id="IPR001986">
    <property type="entry name" value="Enolpyruvate_Tfrase_dom"/>
</dbReference>
<dbReference type="InterPro" id="IPR036968">
    <property type="entry name" value="Enolpyruvate_Tfrase_sf"/>
</dbReference>
<dbReference type="InterPro" id="IPR006264">
    <property type="entry name" value="EPSP_synthase"/>
</dbReference>
<dbReference type="InterPro" id="IPR023193">
    <property type="entry name" value="EPSP_synthase_CS"/>
</dbReference>
<dbReference type="InterPro" id="IPR013792">
    <property type="entry name" value="RNA3'P_cycl/enolpyr_Trfase_a/b"/>
</dbReference>
<dbReference type="NCBIfam" id="TIGR01356">
    <property type="entry name" value="aroA"/>
    <property type="match status" value="1"/>
</dbReference>
<dbReference type="PANTHER" id="PTHR21090">
    <property type="entry name" value="AROM/DEHYDROQUINATE SYNTHASE"/>
    <property type="match status" value="1"/>
</dbReference>
<dbReference type="PANTHER" id="PTHR21090:SF5">
    <property type="entry name" value="PENTAFUNCTIONAL AROM POLYPEPTIDE"/>
    <property type="match status" value="1"/>
</dbReference>
<dbReference type="Pfam" id="PF00275">
    <property type="entry name" value="EPSP_synthase"/>
    <property type="match status" value="1"/>
</dbReference>
<dbReference type="PIRSF" id="PIRSF000505">
    <property type="entry name" value="EPSPS"/>
    <property type="match status" value="1"/>
</dbReference>
<dbReference type="SUPFAM" id="SSF55205">
    <property type="entry name" value="EPT/RTPC-like"/>
    <property type="match status" value="1"/>
</dbReference>
<dbReference type="PROSITE" id="PS00104">
    <property type="entry name" value="EPSP_SYNTHASE_1"/>
    <property type="match status" value="1"/>
</dbReference>
<dbReference type="PROSITE" id="PS00885">
    <property type="entry name" value="EPSP_SYNTHASE_2"/>
    <property type="match status" value="1"/>
</dbReference>
<proteinExistence type="inferred from homology"/>
<gene>
    <name evidence="1" type="primary">aroA</name>
    <name type="ordered locus">YPO1390</name>
    <name type="ordered locus">y2783</name>
    <name type="ordered locus">YP_1203</name>
</gene>
<name>AROA_YERPE</name>